<accession>O67413</accession>
<protein>
    <recommendedName>
        <fullName evidence="1">Probable molybdenum cofactor guanylyltransferase</fullName>
        <shortName evidence="1">MoCo guanylyltransferase</shortName>
        <ecNumber evidence="1">2.7.7.77</ecNumber>
    </recommendedName>
    <alternativeName>
        <fullName evidence="1">GTP:molybdopterin guanylyltransferase</fullName>
    </alternativeName>
    <alternativeName>
        <fullName evidence="1">Mo-MPT guanylyltransferase</fullName>
    </alternativeName>
    <alternativeName>
        <fullName evidence="1">Molybdopterin guanylyltransferase</fullName>
    </alternativeName>
    <alternativeName>
        <fullName evidence="1">Molybdopterin-guanine dinucleotide synthase</fullName>
        <shortName evidence="1">MGD synthase</shortName>
    </alternativeName>
</protein>
<reference key="1">
    <citation type="journal article" date="1998" name="Nature">
        <title>The complete genome of the hyperthermophilic bacterium Aquifex aeolicus.</title>
        <authorList>
            <person name="Deckert G."/>
            <person name="Warren P.V."/>
            <person name="Gaasterland T."/>
            <person name="Young W.G."/>
            <person name="Lenox A.L."/>
            <person name="Graham D.E."/>
            <person name="Overbeek R."/>
            <person name="Snead M.A."/>
            <person name="Keller M."/>
            <person name="Aujay M."/>
            <person name="Huber R."/>
            <person name="Feldman R.A."/>
            <person name="Short J.M."/>
            <person name="Olsen G.J."/>
            <person name="Swanson R.V."/>
        </authorList>
    </citation>
    <scope>NUCLEOTIDE SEQUENCE [LARGE SCALE GENOMIC DNA]</scope>
    <source>
        <strain>VF5</strain>
    </source>
</reference>
<sequence length="201" mass="23350">MRTFTWRKGSLSKVNTCYVLAGGKSKRFGEDKLLYEIKGKKVIERVYETAKSVFKEVYIVAKDREKFSFLNAPVVLDEFEESASIIGLYTALKHAKEENVFVLSGDLPLMKKETVLYVLENFKEPVSVAKTEKLHTLVGVYSKKLLEKIEERIKKGDYRIWALLKDVGYNEVEIPEELRYTLLNMNTKEDLKRILAIENHY</sequence>
<organism>
    <name type="scientific">Aquifex aeolicus (strain VF5)</name>
    <dbReference type="NCBI Taxonomy" id="224324"/>
    <lineage>
        <taxon>Bacteria</taxon>
        <taxon>Pseudomonadati</taxon>
        <taxon>Aquificota</taxon>
        <taxon>Aquificia</taxon>
        <taxon>Aquificales</taxon>
        <taxon>Aquificaceae</taxon>
        <taxon>Aquifex</taxon>
    </lineage>
</organism>
<gene>
    <name evidence="1" type="primary">mobA</name>
    <name type="ordered locus">aq_1419</name>
</gene>
<keyword id="KW-0002">3D-structure</keyword>
<keyword id="KW-0963">Cytoplasm</keyword>
<keyword id="KW-0342">GTP-binding</keyword>
<keyword id="KW-0460">Magnesium</keyword>
<keyword id="KW-0479">Metal-binding</keyword>
<keyword id="KW-0501">Molybdenum cofactor biosynthesis</keyword>
<keyword id="KW-0547">Nucleotide-binding</keyword>
<keyword id="KW-1185">Reference proteome</keyword>
<keyword id="KW-0808">Transferase</keyword>
<proteinExistence type="evidence at protein level"/>
<dbReference type="EC" id="2.7.7.77" evidence="1"/>
<dbReference type="EMBL" id="AE000657">
    <property type="protein sequence ID" value="AAC07379.1"/>
    <property type="molecule type" value="Genomic_DNA"/>
</dbReference>
<dbReference type="PIR" id="C70423">
    <property type="entry name" value="C70423"/>
</dbReference>
<dbReference type="RefSeq" id="NP_213978.1">
    <property type="nucleotide sequence ID" value="NC_000918.1"/>
</dbReference>
<dbReference type="PDB" id="2E8B">
    <property type="method" value="X-ray"/>
    <property type="resolution" value="1.61 A"/>
    <property type="chains" value="A=1-201"/>
</dbReference>
<dbReference type="PDBsum" id="2E8B"/>
<dbReference type="SMR" id="O67413"/>
<dbReference type="FunCoup" id="O67413">
    <property type="interactions" value="62"/>
</dbReference>
<dbReference type="STRING" id="224324.aq_1419"/>
<dbReference type="EnsemblBacteria" id="AAC07379">
    <property type="protein sequence ID" value="AAC07379"/>
    <property type="gene ID" value="aq_1419"/>
</dbReference>
<dbReference type="KEGG" id="aae:aq_1419"/>
<dbReference type="PATRIC" id="fig|224324.8.peg.1109"/>
<dbReference type="eggNOG" id="COG0746">
    <property type="taxonomic scope" value="Bacteria"/>
</dbReference>
<dbReference type="HOGENOM" id="CLU_055597_2_2_0"/>
<dbReference type="InParanoid" id="O67413"/>
<dbReference type="OrthoDB" id="9788394at2"/>
<dbReference type="EvolutionaryTrace" id="O67413"/>
<dbReference type="Proteomes" id="UP000000798">
    <property type="component" value="Chromosome"/>
</dbReference>
<dbReference type="GO" id="GO:0005737">
    <property type="term" value="C:cytoplasm"/>
    <property type="evidence" value="ECO:0007669"/>
    <property type="project" value="UniProtKB-SubCell"/>
</dbReference>
<dbReference type="GO" id="GO:0005525">
    <property type="term" value="F:GTP binding"/>
    <property type="evidence" value="ECO:0007669"/>
    <property type="project" value="UniProtKB-UniRule"/>
</dbReference>
<dbReference type="GO" id="GO:0046872">
    <property type="term" value="F:metal ion binding"/>
    <property type="evidence" value="ECO:0007669"/>
    <property type="project" value="UniProtKB-KW"/>
</dbReference>
<dbReference type="GO" id="GO:0061603">
    <property type="term" value="F:molybdenum cofactor guanylyltransferase activity"/>
    <property type="evidence" value="ECO:0007669"/>
    <property type="project" value="UniProtKB-EC"/>
</dbReference>
<dbReference type="GO" id="GO:0016779">
    <property type="term" value="F:nucleotidyltransferase activity"/>
    <property type="evidence" value="ECO:0000318"/>
    <property type="project" value="GO_Central"/>
</dbReference>
<dbReference type="GO" id="GO:0006777">
    <property type="term" value="P:Mo-molybdopterin cofactor biosynthetic process"/>
    <property type="evidence" value="ECO:0007669"/>
    <property type="project" value="UniProtKB-KW"/>
</dbReference>
<dbReference type="CDD" id="cd02503">
    <property type="entry name" value="MobA"/>
    <property type="match status" value="1"/>
</dbReference>
<dbReference type="Gene3D" id="3.90.550.10">
    <property type="entry name" value="Spore Coat Polysaccharide Biosynthesis Protein SpsA, Chain A"/>
    <property type="match status" value="1"/>
</dbReference>
<dbReference type="HAMAP" id="MF_00316">
    <property type="entry name" value="MobA"/>
    <property type="match status" value="1"/>
</dbReference>
<dbReference type="InterPro" id="IPR025877">
    <property type="entry name" value="MobA-like_NTP_Trfase"/>
</dbReference>
<dbReference type="InterPro" id="IPR013482">
    <property type="entry name" value="Molybde_CF_guanTrfase"/>
</dbReference>
<dbReference type="InterPro" id="IPR029044">
    <property type="entry name" value="Nucleotide-diphossugar_trans"/>
</dbReference>
<dbReference type="NCBIfam" id="NF001457">
    <property type="entry name" value="PRK00317.1-3"/>
    <property type="match status" value="1"/>
</dbReference>
<dbReference type="PANTHER" id="PTHR19136">
    <property type="entry name" value="MOLYBDENUM COFACTOR GUANYLYLTRANSFERASE"/>
    <property type="match status" value="1"/>
</dbReference>
<dbReference type="PANTHER" id="PTHR19136:SF81">
    <property type="entry name" value="MOLYBDENUM COFACTOR GUANYLYLTRANSFERASE"/>
    <property type="match status" value="1"/>
</dbReference>
<dbReference type="Pfam" id="PF12804">
    <property type="entry name" value="NTP_transf_3"/>
    <property type="match status" value="1"/>
</dbReference>
<dbReference type="SUPFAM" id="SSF53448">
    <property type="entry name" value="Nucleotide-diphospho-sugar transferases"/>
    <property type="match status" value="1"/>
</dbReference>
<name>MOBA_AQUAE</name>
<comment type="function">
    <text evidence="1">Transfers a GMP moiety from GTP to Mo-molybdopterin (Mo-MPT) cofactor (Moco or molybdenum cofactor) to form Mo-molybdopterin guanine dinucleotide (Mo-MGD) cofactor.</text>
</comment>
<comment type="catalytic activity">
    <reaction evidence="1">
        <text>Mo-molybdopterin + GTP + H(+) = Mo-molybdopterin guanine dinucleotide + diphosphate</text>
        <dbReference type="Rhea" id="RHEA:34243"/>
        <dbReference type="ChEBI" id="CHEBI:15378"/>
        <dbReference type="ChEBI" id="CHEBI:33019"/>
        <dbReference type="ChEBI" id="CHEBI:37565"/>
        <dbReference type="ChEBI" id="CHEBI:71302"/>
        <dbReference type="ChEBI" id="CHEBI:71310"/>
        <dbReference type="EC" id="2.7.7.77"/>
    </reaction>
</comment>
<comment type="cofactor">
    <cofactor evidence="1">
        <name>Mg(2+)</name>
        <dbReference type="ChEBI" id="CHEBI:18420"/>
    </cofactor>
</comment>
<comment type="subcellular location">
    <subcellularLocation>
        <location evidence="1">Cytoplasm</location>
    </subcellularLocation>
</comment>
<comment type="domain">
    <text evidence="1">The N-terminal domain determines nucleotide recognition and specific binding, while the C-terminal domain determines the specific binding to the target protein.</text>
</comment>
<comment type="similarity">
    <text evidence="1">Belongs to the MobA family.</text>
</comment>
<evidence type="ECO:0000255" key="1">
    <source>
        <dbReference type="HAMAP-Rule" id="MF_00316"/>
    </source>
</evidence>
<evidence type="ECO:0007829" key="2">
    <source>
        <dbReference type="PDB" id="2E8B"/>
    </source>
</evidence>
<feature type="chain" id="PRO_0000134879" description="Probable molybdenum cofactor guanylyltransferase">
    <location>
        <begin position="1"/>
        <end position="201"/>
    </location>
</feature>
<feature type="binding site" evidence="1">
    <location>
        <begin position="20"/>
        <end position="22"/>
    </location>
    <ligand>
        <name>GTP</name>
        <dbReference type="ChEBI" id="CHEBI:37565"/>
    </ligand>
</feature>
<feature type="binding site" evidence="1">
    <location>
        <position position="32"/>
    </location>
    <ligand>
        <name>GTP</name>
        <dbReference type="ChEBI" id="CHEBI:37565"/>
    </ligand>
</feature>
<feature type="binding site" evidence="1">
    <location>
        <position position="77"/>
    </location>
    <ligand>
        <name>GTP</name>
        <dbReference type="ChEBI" id="CHEBI:37565"/>
    </ligand>
</feature>
<feature type="binding site" evidence="1">
    <location>
        <position position="106"/>
    </location>
    <ligand>
        <name>GTP</name>
        <dbReference type="ChEBI" id="CHEBI:37565"/>
    </ligand>
</feature>
<feature type="binding site" evidence="1">
    <location>
        <position position="106"/>
    </location>
    <ligand>
        <name>Mg(2+)</name>
        <dbReference type="ChEBI" id="CHEBI:18420"/>
    </ligand>
</feature>
<feature type="turn" evidence="2">
    <location>
        <begin position="8"/>
        <end position="10"/>
    </location>
</feature>
<feature type="strand" evidence="2">
    <location>
        <begin position="16"/>
        <end position="24"/>
    </location>
</feature>
<feature type="helix" evidence="2">
    <location>
        <begin position="32"/>
        <end position="51"/>
    </location>
</feature>
<feature type="strand" evidence="2">
    <location>
        <begin position="55"/>
        <end position="62"/>
    </location>
</feature>
<feature type="helix" evidence="2">
    <location>
        <begin position="65"/>
        <end position="70"/>
    </location>
</feature>
<feature type="strand" evidence="2">
    <location>
        <begin position="74"/>
        <end position="76"/>
    </location>
</feature>
<feature type="helix" evidence="2">
    <location>
        <begin position="84"/>
        <end position="94"/>
    </location>
</feature>
<feature type="strand" evidence="2">
    <location>
        <begin position="96"/>
        <end position="104"/>
    </location>
</feature>
<feature type="helix" evidence="2">
    <location>
        <begin position="112"/>
        <end position="120"/>
    </location>
</feature>
<feature type="strand" evidence="2">
    <location>
        <begin position="124"/>
        <end position="142"/>
    </location>
</feature>
<feature type="helix" evidence="2">
    <location>
        <begin position="143"/>
        <end position="145"/>
    </location>
</feature>
<feature type="helix" evidence="2">
    <location>
        <begin position="146"/>
        <end position="154"/>
    </location>
</feature>
<feature type="helix" evidence="2">
    <location>
        <begin position="160"/>
        <end position="167"/>
    </location>
</feature>
<feature type="strand" evidence="2">
    <location>
        <begin position="170"/>
        <end position="173"/>
    </location>
</feature>
<feature type="helix" evidence="2">
    <location>
        <begin position="176"/>
        <end position="182"/>
    </location>
</feature>